<reference key="1">
    <citation type="journal article" date="2000" name="Nature">
        <title>Sequence and analysis of chromosome 3 of the plant Arabidopsis thaliana.</title>
        <authorList>
            <person name="Salanoubat M."/>
            <person name="Lemcke K."/>
            <person name="Rieger M."/>
            <person name="Ansorge W."/>
            <person name="Unseld M."/>
            <person name="Fartmann B."/>
            <person name="Valle G."/>
            <person name="Bloecker H."/>
            <person name="Perez-Alonso M."/>
            <person name="Obermaier B."/>
            <person name="Delseny M."/>
            <person name="Boutry M."/>
            <person name="Grivell L.A."/>
            <person name="Mache R."/>
            <person name="Puigdomenech P."/>
            <person name="De Simone V."/>
            <person name="Choisne N."/>
            <person name="Artiguenave F."/>
            <person name="Robert C."/>
            <person name="Brottier P."/>
            <person name="Wincker P."/>
            <person name="Cattolico L."/>
            <person name="Weissenbach J."/>
            <person name="Saurin W."/>
            <person name="Quetier F."/>
            <person name="Schaefer M."/>
            <person name="Mueller-Auer S."/>
            <person name="Gabel C."/>
            <person name="Fuchs M."/>
            <person name="Benes V."/>
            <person name="Wurmbach E."/>
            <person name="Drzonek H."/>
            <person name="Erfle H."/>
            <person name="Jordan N."/>
            <person name="Bangert S."/>
            <person name="Wiedelmann R."/>
            <person name="Kranz H."/>
            <person name="Voss H."/>
            <person name="Holland R."/>
            <person name="Brandt P."/>
            <person name="Nyakatura G."/>
            <person name="Vezzi A."/>
            <person name="D'Angelo M."/>
            <person name="Pallavicini A."/>
            <person name="Toppo S."/>
            <person name="Simionati B."/>
            <person name="Conrad A."/>
            <person name="Hornischer K."/>
            <person name="Kauer G."/>
            <person name="Loehnert T.-H."/>
            <person name="Nordsiek G."/>
            <person name="Reichelt J."/>
            <person name="Scharfe M."/>
            <person name="Schoen O."/>
            <person name="Bargues M."/>
            <person name="Terol J."/>
            <person name="Climent J."/>
            <person name="Navarro P."/>
            <person name="Collado C."/>
            <person name="Perez-Perez A."/>
            <person name="Ottenwaelder B."/>
            <person name="Duchemin D."/>
            <person name="Cooke R."/>
            <person name="Laudie M."/>
            <person name="Berger-Llauro C."/>
            <person name="Purnelle B."/>
            <person name="Masuy D."/>
            <person name="de Haan M."/>
            <person name="Maarse A.C."/>
            <person name="Alcaraz J.-P."/>
            <person name="Cottet A."/>
            <person name="Casacuberta E."/>
            <person name="Monfort A."/>
            <person name="Argiriou A."/>
            <person name="Flores M."/>
            <person name="Liguori R."/>
            <person name="Vitale D."/>
            <person name="Mannhaupt G."/>
            <person name="Haase D."/>
            <person name="Schoof H."/>
            <person name="Rudd S."/>
            <person name="Zaccaria P."/>
            <person name="Mewes H.-W."/>
            <person name="Mayer K.F.X."/>
            <person name="Kaul S."/>
            <person name="Town C.D."/>
            <person name="Koo H.L."/>
            <person name="Tallon L.J."/>
            <person name="Jenkins J."/>
            <person name="Rooney T."/>
            <person name="Rizzo M."/>
            <person name="Walts A."/>
            <person name="Utterback T."/>
            <person name="Fujii C.Y."/>
            <person name="Shea T.P."/>
            <person name="Creasy T.H."/>
            <person name="Haas B."/>
            <person name="Maiti R."/>
            <person name="Wu D."/>
            <person name="Peterson J."/>
            <person name="Van Aken S."/>
            <person name="Pai G."/>
            <person name="Militscher J."/>
            <person name="Sellers P."/>
            <person name="Gill J.E."/>
            <person name="Feldblyum T.V."/>
            <person name="Preuss D."/>
            <person name="Lin X."/>
            <person name="Nierman W.C."/>
            <person name="Salzberg S.L."/>
            <person name="White O."/>
            <person name="Venter J.C."/>
            <person name="Fraser C.M."/>
            <person name="Kaneko T."/>
            <person name="Nakamura Y."/>
            <person name="Sato S."/>
            <person name="Kato T."/>
            <person name="Asamizu E."/>
            <person name="Sasamoto S."/>
            <person name="Kimura T."/>
            <person name="Idesawa K."/>
            <person name="Kawashima K."/>
            <person name="Kishida Y."/>
            <person name="Kiyokawa C."/>
            <person name="Kohara M."/>
            <person name="Matsumoto M."/>
            <person name="Matsuno A."/>
            <person name="Muraki A."/>
            <person name="Nakayama S."/>
            <person name="Nakazaki N."/>
            <person name="Shinpo S."/>
            <person name="Takeuchi C."/>
            <person name="Wada T."/>
            <person name="Watanabe A."/>
            <person name="Yamada M."/>
            <person name="Yasuda M."/>
            <person name="Tabata S."/>
        </authorList>
    </citation>
    <scope>NUCLEOTIDE SEQUENCE [LARGE SCALE GENOMIC DNA]</scope>
    <source>
        <strain>cv. Columbia</strain>
    </source>
</reference>
<reference key="2">
    <citation type="journal article" date="2017" name="Plant J.">
        <title>Araport11: a complete reannotation of the Arabidopsis thaliana reference genome.</title>
        <authorList>
            <person name="Cheng C.Y."/>
            <person name="Krishnakumar V."/>
            <person name="Chan A.P."/>
            <person name="Thibaud-Nissen F."/>
            <person name="Schobel S."/>
            <person name="Town C.D."/>
        </authorList>
    </citation>
    <scope>GENOME REANNOTATION</scope>
    <source>
        <strain>cv. Columbia</strain>
    </source>
</reference>
<reference key="3">
    <citation type="journal article" date="2003" name="Science">
        <title>Empirical analysis of transcriptional activity in the Arabidopsis genome.</title>
        <authorList>
            <person name="Yamada K."/>
            <person name="Lim J."/>
            <person name="Dale J.M."/>
            <person name="Chen H."/>
            <person name="Shinn P."/>
            <person name="Palm C.J."/>
            <person name="Southwick A.M."/>
            <person name="Wu H.C."/>
            <person name="Kim C.J."/>
            <person name="Nguyen M."/>
            <person name="Pham P.K."/>
            <person name="Cheuk R.F."/>
            <person name="Karlin-Newmann G."/>
            <person name="Liu S.X."/>
            <person name="Lam B."/>
            <person name="Sakano H."/>
            <person name="Wu T."/>
            <person name="Yu G."/>
            <person name="Miranda M."/>
            <person name="Quach H.L."/>
            <person name="Tripp M."/>
            <person name="Chang C.H."/>
            <person name="Lee J.M."/>
            <person name="Toriumi M.J."/>
            <person name="Chan M.M."/>
            <person name="Tang C.C."/>
            <person name="Onodera C.S."/>
            <person name="Deng J.M."/>
            <person name="Akiyama K."/>
            <person name="Ansari Y."/>
            <person name="Arakawa T."/>
            <person name="Banh J."/>
            <person name="Banno F."/>
            <person name="Bowser L."/>
            <person name="Brooks S.Y."/>
            <person name="Carninci P."/>
            <person name="Chao Q."/>
            <person name="Choy N."/>
            <person name="Enju A."/>
            <person name="Goldsmith A.D."/>
            <person name="Gurjal M."/>
            <person name="Hansen N.F."/>
            <person name="Hayashizaki Y."/>
            <person name="Johnson-Hopson C."/>
            <person name="Hsuan V.W."/>
            <person name="Iida K."/>
            <person name="Karnes M."/>
            <person name="Khan S."/>
            <person name="Koesema E."/>
            <person name="Ishida J."/>
            <person name="Jiang P.X."/>
            <person name="Jones T."/>
            <person name="Kawai J."/>
            <person name="Kamiya A."/>
            <person name="Meyers C."/>
            <person name="Nakajima M."/>
            <person name="Narusaka M."/>
            <person name="Seki M."/>
            <person name="Sakurai T."/>
            <person name="Satou M."/>
            <person name="Tamse R."/>
            <person name="Vaysberg M."/>
            <person name="Wallender E.K."/>
            <person name="Wong C."/>
            <person name="Yamamura Y."/>
            <person name="Yuan S."/>
            <person name="Shinozaki K."/>
            <person name="Davis R.W."/>
            <person name="Theologis A."/>
            <person name="Ecker J.R."/>
        </authorList>
    </citation>
    <scope>NUCLEOTIDE SEQUENCE [LARGE SCALE MRNA]</scope>
    <source>
        <strain>cv. Columbia</strain>
    </source>
</reference>
<reference key="4">
    <citation type="journal article" date="2017" name="FEBS Lett.">
        <title>Functional identification of AtAVT3, a family of vacuolar amino acid transporters, in Arabidopsis.</title>
        <authorList>
            <person name="Fujiki Y."/>
            <person name="Teshima H."/>
            <person name="Kashiwao S."/>
            <person name="Kawano-Kawada M."/>
            <person name="Ohsumi Y."/>
            <person name="Kakinuma Y."/>
            <person name="Sekito T."/>
        </authorList>
    </citation>
    <scope>GENE FAMILY</scope>
    <scope>NOMENCLATURE</scope>
</reference>
<proteinExistence type="evidence at transcript level"/>
<comment type="subcellular location">
    <subcellularLocation>
        <location evidence="1">Membrane</location>
        <topology evidence="1">Multi-pass membrane protein</topology>
    </subcellularLocation>
</comment>
<comment type="similarity">
    <text evidence="4">Belongs to the amino acid/polyamine transporter 2 family. Amino acid/auxin permease (AAAP) (TC 2.A.18.6) subfamily.</text>
</comment>
<organism>
    <name type="scientific">Arabidopsis thaliana</name>
    <name type="common">Mouse-ear cress</name>
    <dbReference type="NCBI Taxonomy" id="3702"/>
    <lineage>
        <taxon>Eukaryota</taxon>
        <taxon>Viridiplantae</taxon>
        <taxon>Streptophyta</taxon>
        <taxon>Embryophyta</taxon>
        <taxon>Tracheophyta</taxon>
        <taxon>Spermatophyta</taxon>
        <taxon>Magnoliopsida</taxon>
        <taxon>eudicotyledons</taxon>
        <taxon>Gunneridae</taxon>
        <taxon>Pentapetalae</taxon>
        <taxon>rosids</taxon>
        <taxon>malvids</taxon>
        <taxon>Brassicales</taxon>
        <taxon>Brassicaceae</taxon>
        <taxon>Camelineae</taxon>
        <taxon>Arabidopsis</taxon>
    </lineage>
</organism>
<dbReference type="EMBL" id="AL163763">
    <property type="protein sequence ID" value="CAB87419.1"/>
    <property type="molecule type" value="Genomic_DNA"/>
</dbReference>
<dbReference type="EMBL" id="CP002686">
    <property type="protein sequence ID" value="AEE79493.1"/>
    <property type="molecule type" value="Genomic_DNA"/>
</dbReference>
<dbReference type="EMBL" id="AY094388">
    <property type="protein sequence ID" value="AAM19768.1"/>
    <property type="molecule type" value="mRNA"/>
</dbReference>
<dbReference type="PIR" id="T47737">
    <property type="entry name" value="T47737"/>
</dbReference>
<dbReference type="RefSeq" id="NP_191179.1">
    <property type="nucleotide sequence ID" value="NM_115478.7"/>
</dbReference>
<dbReference type="SMR" id="Q9LYM2"/>
<dbReference type="FunCoup" id="Q9LYM2">
    <property type="interactions" value="859"/>
</dbReference>
<dbReference type="IntAct" id="Q9LYM2">
    <property type="interactions" value="2"/>
</dbReference>
<dbReference type="STRING" id="3702.Q9LYM2"/>
<dbReference type="PaxDb" id="3702-AT3G56200.1"/>
<dbReference type="ProteomicsDB" id="241160"/>
<dbReference type="EnsemblPlants" id="AT3G56200.1">
    <property type="protein sequence ID" value="AT3G56200.1"/>
    <property type="gene ID" value="AT3G56200"/>
</dbReference>
<dbReference type="GeneID" id="824786"/>
<dbReference type="Gramene" id="AT3G56200.1">
    <property type="protein sequence ID" value="AT3G56200.1"/>
    <property type="gene ID" value="AT3G56200"/>
</dbReference>
<dbReference type="KEGG" id="ath:AT3G56200"/>
<dbReference type="Araport" id="AT3G56200"/>
<dbReference type="TAIR" id="AT3G56200"/>
<dbReference type="eggNOG" id="KOG1305">
    <property type="taxonomic scope" value="Eukaryota"/>
</dbReference>
<dbReference type="HOGENOM" id="CLU_034419_2_0_1"/>
<dbReference type="InParanoid" id="Q9LYM2"/>
<dbReference type="OMA" id="FGCARFG"/>
<dbReference type="PhylomeDB" id="Q9LYM2"/>
<dbReference type="PRO" id="PR:Q9LYM2"/>
<dbReference type="Proteomes" id="UP000006548">
    <property type="component" value="Chromosome 3"/>
</dbReference>
<dbReference type="ExpressionAtlas" id="Q9LYM2">
    <property type="expression patterns" value="baseline and differential"/>
</dbReference>
<dbReference type="GO" id="GO:0031090">
    <property type="term" value="C:organelle membrane"/>
    <property type="evidence" value="ECO:0007669"/>
    <property type="project" value="UniProtKB-ARBA"/>
</dbReference>
<dbReference type="GO" id="GO:0006865">
    <property type="term" value="P:amino acid transport"/>
    <property type="evidence" value="ECO:0007669"/>
    <property type="project" value="UniProtKB-KW"/>
</dbReference>
<dbReference type="InterPro" id="IPR013057">
    <property type="entry name" value="AA_transpt_TM"/>
</dbReference>
<dbReference type="PANTHER" id="PTHR22950">
    <property type="entry name" value="AMINO ACID TRANSPORTER"/>
    <property type="match status" value="1"/>
</dbReference>
<dbReference type="PANTHER" id="PTHR22950:SF323">
    <property type="entry name" value="AMINO ACID TRANSPORTER AVT6C"/>
    <property type="match status" value="1"/>
</dbReference>
<dbReference type="Pfam" id="PF01490">
    <property type="entry name" value="Aa_trans"/>
    <property type="match status" value="1"/>
</dbReference>
<name>AVT6C_ARATH</name>
<feature type="chain" id="PRO_0000440114" description="Amino acid transporter AVT6C">
    <location>
        <begin position="1"/>
        <end position="435"/>
    </location>
</feature>
<feature type="transmembrane region" description="Helical; Name=1" evidence="1">
    <location>
        <begin position="28"/>
        <end position="48"/>
    </location>
</feature>
<feature type="transmembrane region" description="Helical; Name=2" evidence="1">
    <location>
        <begin position="53"/>
        <end position="73"/>
    </location>
</feature>
<feature type="transmembrane region" description="Helical; Name=3" evidence="1">
    <location>
        <begin position="100"/>
        <end position="120"/>
    </location>
</feature>
<feature type="transmembrane region" description="Helical; Name=4" evidence="1">
    <location>
        <begin position="148"/>
        <end position="168"/>
    </location>
</feature>
<feature type="transmembrane region" description="Helical; Name=5" evidence="1">
    <location>
        <begin position="181"/>
        <end position="201"/>
    </location>
</feature>
<feature type="transmembrane region" description="Helical; Name=6" evidence="1">
    <location>
        <begin position="219"/>
        <end position="239"/>
    </location>
</feature>
<feature type="transmembrane region" description="Helical; Name=7" evidence="1">
    <location>
        <begin position="260"/>
        <end position="280"/>
    </location>
</feature>
<feature type="transmembrane region" description="Helical; Name=8" evidence="1">
    <location>
        <begin position="307"/>
        <end position="327"/>
    </location>
</feature>
<feature type="transmembrane region" description="Helical; Name=9" evidence="1">
    <location>
        <begin position="354"/>
        <end position="374"/>
    </location>
</feature>
<feature type="transmembrane region" description="Helical; Name=10" evidence="1">
    <location>
        <begin position="375"/>
        <end position="395"/>
    </location>
</feature>
<feature type="transmembrane region" description="Helical; Name=11" evidence="1">
    <location>
        <begin position="408"/>
        <end position="428"/>
    </location>
</feature>
<feature type="region of interest" description="Disordered" evidence="2">
    <location>
        <begin position="1"/>
        <end position="24"/>
    </location>
</feature>
<protein>
    <recommendedName>
        <fullName evidence="4">Amino acid transporter AVT6C</fullName>
        <shortName evidence="3">AtAvt6C</shortName>
    </recommendedName>
</protein>
<gene>
    <name evidence="3" type="primary">AVT6C</name>
    <name evidence="5" type="ordered locus">At3g56200</name>
    <name evidence="6" type="ORF">F18O21_160</name>
</gene>
<sequence length="435" mass="47105">MTPQIKTHLLPKQEPSSSENHGSSTSGIVFNVSTSIIGAGIMSMPAAFKVLGIVPAFLIITIIAWLSTISVGFLMKSTLAGESTTYAGVMKESFGKTGSIAVQIATMVATFGCMIIFSIIIGDVLSGNENGGPEHIGVLQEWFGSYWWNTRIFALLFVYGFVLLPLVLRRRVERLAISSAVSFLLAVLFVVISSVLAISALVNGQTKNPRLFPELSNGGSFWQLFTASPVIVTAFTFHFNVHPIGFELKDPLQVIPATKISVILCAAIYFATGLFGYLLFGDATMSDILVNFDQSSGSSIGSLLNDIVRLSYVLHLMLVFPLLNFSLRANLDELLYPKKPSLEKDTKRFIGLTLALLICCFLSAIAVPDIWYFFQFMGSTITVSIAFIFPAAIVLRNIHGVSTSREKIVAAIMLVLAVATSIIAISTNLYSLAAN</sequence>
<evidence type="ECO:0000255" key="1"/>
<evidence type="ECO:0000256" key="2">
    <source>
        <dbReference type="SAM" id="MobiDB-lite"/>
    </source>
</evidence>
<evidence type="ECO:0000303" key="3">
    <source>
    </source>
</evidence>
<evidence type="ECO:0000305" key="4"/>
<evidence type="ECO:0000312" key="5">
    <source>
        <dbReference type="Araport" id="AT3G56200"/>
    </source>
</evidence>
<evidence type="ECO:0000312" key="6">
    <source>
        <dbReference type="EMBL" id="CAB87419.1"/>
    </source>
</evidence>
<accession>Q9LYM2</accession>
<keyword id="KW-0029">Amino-acid transport</keyword>
<keyword id="KW-0472">Membrane</keyword>
<keyword id="KW-1185">Reference proteome</keyword>
<keyword id="KW-0812">Transmembrane</keyword>
<keyword id="KW-1133">Transmembrane helix</keyword>
<keyword id="KW-0813">Transport</keyword>